<comment type="function">
    <text evidence="1">Part of the ABC transporter complex RbsABC involved in ribose import. Responsible for energy coupling to the transport system.</text>
</comment>
<comment type="catalytic activity">
    <reaction evidence="1">
        <text>D-ribose(out) + ATP + H2O = D-ribose(in) + ADP + phosphate + H(+)</text>
        <dbReference type="Rhea" id="RHEA:29903"/>
        <dbReference type="ChEBI" id="CHEBI:15377"/>
        <dbReference type="ChEBI" id="CHEBI:15378"/>
        <dbReference type="ChEBI" id="CHEBI:30616"/>
        <dbReference type="ChEBI" id="CHEBI:43474"/>
        <dbReference type="ChEBI" id="CHEBI:47013"/>
        <dbReference type="ChEBI" id="CHEBI:456216"/>
        <dbReference type="EC" id="7.5.2.7"/>
    </reaction>
</comment>
<comment type="subunit">
    <text evidence="1">The complex is composed of an ATP-binding protein (RbsA), two transmembrane proteins (RbsC) and a solute-binding protein (RbsB).</text>
</comment>
<comment type="subcellular location">
    <subcellularLocation>
        <location evidence="1">Cell membrane</location>
        <topology evidence="1">Peripheral membrane protein</topology>
    </subcellularLocation>
</comment>
<comment type="similarity">
    <text evidence="1">Belongs to the ABC transporter superfamily. Ribose importer (TC 3.A.1.2.1) family.</text>
</comment>
<gene>
    <name evidence="1" type="primary">rbsA3</name>
    <name type="ordered locus">Rxyl_3003</name>
</gene>
<proteinExistence type="inferred from homology"/>
<evidence type="ECO:0000255" key="1">
    <source>
        <dbReference type="HAMAP-Rule" id="MF_01716"/>
    </source>
</evidence>
<organism>
    <name type="scientific">Rubrobacter xylanophilus (strain DSM 9941 / JCM 11954 / NBRC 16129 / PRD-1)</name>
    <dbReference type="NCBI Taxonomy" id="266117"/>
    <lineage>
        <taxon>Bacteria</taxon>
        <taxon>Bacillati</taxon>
        <taxon>Actinomycetota</taxon>
        <taxon>Rubrobacteria</taxon>
        <taxon>Rubrobacterales</taxon>
        <taxon>Rubrobacteraceae</taxon>
        <taxon>Rubrobacter</taxon>
    </lineage>
</organism>
<dbReference type="EC" id="7.5.2.7" evidence="1"/>
<dbReference type="EMBL" id="CP000386">
    <property type="protein sequence ID" value="ABG05913.1"/>
    <property type="molecule type" value="Genomic_DNA"/>
</dbReference>
<dbReference type="SMR" id="Q1ARR5"/>
<dbReference type="STRING" id="266117.Rxyl_3003"/>
<dbReference type="KEGG" id="rxy:Rxyl_3003"/>
<dbReference type="eggNOG" id="COG1129">
    <property type="taxonomic scope" value="Bacteria"/>
</dbReference>
<dbReference type="HOGENOM" id="CLU_000604_92_3_11"/>
<dbReference type="PhylomeDB" id="Q1ARR5"/>
<dbReference type="Proteomes" id="UP000006637">
    <property type="component" value="Chromosome"/>
</dbReference>
<dbReference type="GO" id="GO:0005886">
    <property type="term" value="C:plasma membrane"/>
    <property type="evidence" value="ECO:0007669"/>
    <property type="project" value="UniProtKB-SubCell"/>
</dbReference>
<dbReference type="GO" id="GO:0015611">
    <property type="term" value="F:ABC-type D-ribose transporter activity"/>
    <property type="evidence" value="ECO:0007669"/>
    <property type="project" value="UniProtKB-EC"/>
</dbReference>
<dbReference type="GO" id="GO:0005524">
    <property type="term" value="F:ATP binding"/>
    <property type="evidence" value="ECO:0007669"/>
    <property type="project" value="UniProtKB-KW"/>
</dbReference>
<dbReference type="GO" id="GO:0016887">
    <property type="term" value="F:ATP hydrolysis activity"/>
    <property type="evidence" value="ECO:0007669"/>
    <property type="project" value="InterPro"/>
</dbReference>
<dbReference type="CDD" id="cd03216">
    <property type="entry name" value="ABC_Carb_Monos_I"/>
    <property type="match status" value="1"/>
</dbReference>
<dbReference type="CDD" id="cd03215">
    <property type="entry name" value="ABC_Carb_Monos_II"/>
    <property type="match status" value="1"/>
</dbReference>
<dbReference type="FunFam" id="3.40.50.300:FF:000127">
    <property type="entry name" value="Ribose import ATP-binding protein RbsA"/>
    <property type="match status" value="1"/>
</dbReference>
<dbReference type="Gene3D" id="3.40.50.300">
    <property type="entry name" value="P-loop containing nucleotide triphosphate hydrolases"/>
    <property type="match status" value="2"/>
</dbReference>
<dbReference type="InterPro" id="IPR003593">
    <property type="entry name" value="AAA+_ATPase"/>
</dbReference>
<dbReference type="InterPro" id="IPR050107">
    <property type="entry name" value="ABC_carbohydrate_import_ATPase"/>
</dbReference>
<dbReference type="InterPro" id="IPR003439">
    <property type="entry name" value="ABC_transporter-like_ATP-bd"/>
</dbReference>
<dbReference type="InterPro" id="IPR017871">
    <property type="entry name" value="ABC_transporter-like_CS"/>
</dbReference>
<dbReference type="InterPro" id="IPR027417">
    <property type="entry name" value="P-loop_NTPase"/>
</dbReference>
<dbReference type="PANTHER" id="PTHR43790">
    <property type="entry name" value="CARBOHYDRATE TRANSPORT ATP-BINDING PROTEIN MG119-RELATED"/>
    <property type="match status" value="1"/>
</dbReference>
<dbReference type="PANTHER" id="PTHR43790:SF3">
    <property type="entry name" value="D-ALLOSE IMPORT ATP-BINDING PROTEIN ALSA-RELATED"/>
    <property type="match status" value="1"/>
</dbReference>
<dbReference type="Pfam" id="PF00005">
    <property type="entry name" value="ABC_tran"/>
    <property type="match status" value="2"/>
</dbReference>
<dbReference type="SMART" id="SM00382">
    <property type="entry name" value="AAA"/>
    <property type="match status" value="2"/>
</dbReference>
<dbReference type="SUPFAM" id="SSF52540">
    <property type="entry name" value="P-loop containing nucleoside triphosphate hydrolases"/>
    <property type="match status" value="2"/>
</dbReference>
<dbReference type="PROSITE" id="PS00211">
    <property type="entry name" value="ABC_TRANSPORTER_1"/>
    <property type="match status" value="1"/>
</dbReference>
<dbReference type="PROSITE" id="PS50893">
    <property type="entry name" value="ABC_TRANSPORTER_2"/>
    <property type="match status" value="2"/>
</dbReference>
<dbReference type="PROSITE" id="PS51254">
    <property type="entry name" value="RBSA"/>
    <property type="match status" value="1"/>
</dbReference>
<accession>Q1ARR5</accession>
<keyword id="KW-0067">ATP-binding</keyword>
<keyword id="KW-1003">Cell membrane</keyword>
<keyword id="KW-0472">Membrane</keyword>
<keyword id="KW-0547">Nucleotide-binding</keyword>
<keyword id="KW-1185">Reference proteome</keyword>
<keyword id="KW-0677">Repeat</keyword>
<keyword id="KW-0762">Sugar transport</keyword>
<keyword id="KW-1278">Translocase</keyword>
<keyword id="KW-0813">Transport</keyword>
<feature type="chain" id="PRO_0000261097" description="Ribose import ATP-binding protein RbsA 3">
    <location>
        <begin position="1"/>
        <end position="495"/>
    </location>
</feature>
<feature type="domain" description="ABC transporter 1" evidence="1">
    <location>
        <begin position="5"/>
        <end position="240"/>
    </location>
</feature>
<feature type="domain" description="ABC transporter 2" evidence="1">
    <location>
        <begin position="250"/>
        <end position="492"/>
    </location>
</feature>
<feature type="binding site" evidence="1">
    <location>
        <begin position="37"/>
        <end position="44"/>
    </location>
    <ligand>
        <name>ATP</name>
        <dbReference type="ChEBI" id="CHEBI:30616"/>
    </ligand>
</feature>
<protein>
    <recommendedName>
        <fullName evidence="1">Ribose import ATP-binding protein RbsA 3</fullName>
        <ecNumber evidence="1">7.5.2.7</ecNumber>
    </recommendedName>
</protein>
<reference key="1">
    <citation type="submission" date="2006-06" db="EMBL/GenBank/DDBJ databases">
        <title>Complete sequence of Rubrobacter xylanophilus DSM 9941.</title>
        <authorList>
            <consortium name="US DOE Joint Genome Institute"/>
            <person name="Copeland A."/>
            <person name="Lucas S."/>
            <person name="Lapidus A."/>
            <person name="Barry K."/>
            <person name="Detter J.C."/>
            <person name="Glavina del Rio T."/>
            <person name="Hammon N."/>
            <person name="Israni S."/>
            <person name="Dalin E."/>
            <person name="Tice H."/>
            <person name="Pitluck S."/>
            <person name="Munk A.C."/>
            <person name="Brettin T."/>
            <person name="Bruce D."/>
            <person name="Han C."/>
            <person name="Tapia R."/>
            <person name="Gilna P."/>
            <person name="Schmutz J."/>
            <person name="Larimer F."/>
            <person name="Land M."/>
            <person name="Hauser L."/>
            <person name="Kyrpides N."/>
            <person name="Lykidis A."/>
            <person name="da Costa M.S."/>
            <person name="Rainey F.A."/>
            <person name="Empadinhas N."/>
            <person name="Jolivet E."/>
            <person name="Battista J.R."/>
            <person name="Richardson P."/>
        </authorList>
    </citation>
    <scope>NUCLEOTIDE SEQUENCE [LARGE SCALE GENOMIC DNA]</scope>
    <source>
        <strain>DSM 9941 / JCM 11954 / NBRC 16129 / PRD-1</strain>
    </source>
</reference>
<sequence length="495" mass="54368">MEPVVRLRGVSKEFPGVVAVDGVDLDILPGEVHVVAGENGAGKSTLMKLLSQVERPTSGEIYISGERVEFHGPGHARRLGVAMVYQEFALAPHLSVAENLFLGREPGRGGFVNRRAEKEEARGLLRRVGLEVDPDRLVSSLTVAEQQRVEIAKALAIDARVVIMDEPTATLAEKEIEELFEVIRDLTSHGRAVLYISHRLDEIFRIADRVTVMRDGKVVATLPVEELDEAKLVRLMVGREIGNLYPKPEAEIGEVLLRVRGLSRGERLKDCSFEVRAGEILGFAGLVGAGRTELARAVFGADPVDSGEIELEGRPLRIRKPQDAIEAGIGYLTEDRKGEGLALQLGIDQNITLASLPARLGFIGLGRERSIAERRREQLNIRTPSVRRKVQVLSGGNQQKVVVARWLETRARVLFFDEPARGIDVGAKAEMFALIGELAREGRGIVLISSYLPELINMCDRILVMRDGRVAGVLEREEFSEEGIIALATGVKETV</sequence>
<name>RBSA3_RUBXD</name>